<accession>Q8HVQ3</accession>
<organism>
    <name type="scientific">Monolopia congdonii</name>
    <name type="common">San Joaquin woollythread</name>
    <name type="synonym">Eatonella congdonii</name>
    <dbReference type="NCBI Taxonomy" id="149447"/>
    <lineage>
        <taxon>Eukaryota</taxon>
        <taxon>Viridiplantae</taxon>
        <taxon>Streptophyta</taxon>
        <taxon>Embryophyta</taxon>
        <taxon>Tracheophyta</taxon>
        <taxon>Spermatophyta</taxon>
        <taxon>Magnoliopsida</taxon>
        <taxon>eudicotyledons</taxon>
        <taxon>Gunneridae</taxon>
        <taxon>Pentapetalae</taxon>
        <taxon>asterids</taxon>
        <taxon>campanulids</taxon>
        <taxon>Asterales</taxon>
        <taxon>Asteraceae</taxon>
        <taxon>Asteroideae</taxon>
        <taxon>Heliantheae alliance</taxon>
        <taxon>Madieae</taxon>
        <taxon>Baeriinae</taxon>
        <taxon>Monolopia</taxon>
    </lineage>
</organism>
<dbReference type="EC" id="7.1.1.-" evidence="1"/>
<dbReference type="EMBL" id="AF383810">
    <property type="protein sequence ID" value="AAN61751.1"/>
    <property type="molecule type" value="Genomic_DNA"/>
</dbReference>
<dbReference type="SMR" id="Q8HVQ3"/>
<dbReference type="GO" id="GO:0009535">
    <property type="term" value="C:chloroplast thylakoid membrane"/>
    <property type="evidence" value="ECO:0007669"/>
    <property type="project" value="UniProtKB-SubCell"/>
</dbReference>
<dbReference type="GO" id="GO:0051539">
    <property type="term" value="F:4 iron, 4 sulfur cluster binding"/>
    <property type="evidence" value="ECO:0007669"/>
    <property type="project" value="UniProtKB-KW"/>
</dbReference>
<dbReference type="GO" id="GO:0005506">
    <property type="term" value="F:iron ion binding"/>
    <property type="evidence" value="ECO:0007669"/>
    <property type="project" value="UniProtKB-UniRule"/>
</dbReference>
<dbReference type="GO" id="GO:0008137">
    <property type="term" value="F:NADH dehydrogenase (ubiquinone) activity"/>
    <property type="evidence" value="ECO:0007669"/>
    <property type="project" value="InterPro"/>
</dbReference>
<dbReference type="GO" id="GO:0048038">
    <property type="term" value="F:quinone binding"/>
    <property type="evidence" value="ECO:0007669"/>
    <property type="project" value="UniProtKB-KW"/>
</dbReference>
<dbReference type="GO" id="GO:0019684">
    <property type="term" value="P:photosynthesis, light reaction"/>
    <property type="evidence" value="ECO:0007669"/>
    <property type="project" value="UniProtKB-UniRule"/>
</dbReference>
<dbReference type="FunFam" id="3.30.70.3270:FF:000006">
    <property type="entry name" value="NAD(P)H-quinone oxidoreductase subunit I, chloroplastic"/>
    <property type="match status" value="1"/>
</dbReference>
<dbReference type="Gene3D" id="3.30.70.3270">
    <property type="match status" value="1"/>
</dbReference>
<dbReference type="HAMAP" id="MF_01351">
    <property type="entry name" value="NDH1_NuoI"/>
    <property type="match status" value="1"/>
</dbReference>
<dbReference type="InterPro" id="IPR017896">
    <property type="entry name" value="4Fe4S_Fe-S-bd"/>
</dbReference>
<dbReference type="InterPro" id="IPR017900">
    <property type="entry name" value="4Fe4S_Fe_S_CS"/>
</dbReference>
<dbReference type="InterPro" id="IPR010226">
    <property type="entry name" value="NADH_quinone_OxRdtase_chainI"/>
</dbReference>
<dbReference type="InterPro" id="IPR004497">
    <property type="entry name" value="NDHI"/>
</dbReference>
<dbReference type="NCBIfam" id="TIGR00403">
    <property type="entry name" value="ndhI"/>
    <property type="match status" value="1"/>
</dbReference>
<dbReference type="NCBIfam" id="TIGR01971">
    <property type="entry name" value="NuoI"/>
    <property type="match status" value="1"/>
</dbReference>
<dbReference type="NCBIfam" id="NF004537">
    <property type="entry name" value="PRK05888.1-3"/>
    <property type="match status" value="1"/>
</dbReference>
<dbReference type="PANTHER" id="PTHR47275">
    <property type="entry name" value="NAD(P)H-QUINONE OXIDOREDUCTASE SUBUNIT I, CHLOROPLASTIC"/>
    <property type="match status" value="1"/>
</dbReference>
<dbReference type="PANTHER" id="PTHR47275:SF1">
    <property type="entry name" value="NAD(P)H-QUINONE OXIDOREDUCTASE SUBUNIT I, CHLOROPLASTIC"/>
    <property type="match status" value="1"/>
</dbReference>
<dbReference type="Pfam" id="PF00037">
    <property type="entry name" value="Fer4"/>
    <property type="match status" value="2"/>
</dbReference>
<dbReference type="SUPFAM" id="SSF54862">
    <property type="entry name" value="4Fe-4S ferredoxins"/>
    <property type="match status" value="1"/>
</dbReference>
<dbReference type="PROSITE" id="PS00198">
    <property type="entry name" value="4FE4S_FER_1"/>
    <property type="match status" value="2"/>
</dbReference>
<dbReference type="PROSITE" id="PS51379">
    <property type="entry name" value="4FE4S_FER_2"/>
    <property type="match status" value="2"/>
</dbReference>
<reference key="1">
    <citation type="submission" date="2003-01" db="EMBL/GenBank/DDBJ databases">
        <title>Chloroplast DNA phylogeny of tribe Heliantheae (Asteraceae).</title>
        <authorList>
            <person name="Panero J.L."/>
            <person name="Baldwin B.G."/>
            <person name="Schilling E.E."/>
            <person name="Clevinger J.A."/>
        </authorList>
    </citation>
    <scope>NUCLEOTIDE SEQUENCE [GENOMIC DNA]</scope>
</reference>
<protein>
    <recommendedName>
        <fullName evidence="1">NAD(P)H-quinone oxidoreductase subunit I, chloroplastic</fullName>
        <ecNumber evidence="1">7.1.1.-</ecNumber>
    </recommendedName>
    <alternativeName>
        <fullName evidence="1">NAD(P)H dehydrogenase subunit I</fullName>
        <shortName evidence="1">NDH subunit I</shortName>
    </alternativeName>
    <alternativeName>
        <fullName evidence="1">NADH-plastoquinone oxidoreductase subunit I</fullName>
    </alternativeName>
</protein>
<geneLocation type="chloroplast"/>
<evidence type="ECO:0000255" key="1">
    <source>
        <dbReference type="HAMAP-Rule" id="MF_01351"/>
    </source>
</evidence>
<sequence>MFPMVTEFMNYGQQTVRAARYIGQGFMITLSHANRLPVTIQYPYEKLITSERFRGRIHFEFDKCIACEVCVRVCPIDLPVVDWKLETDIRKKRLLNYSIDFGICIFCGNCVEYCPTNCLSMTEEYELSTYDRHELNYNQIALGRLPMSIIDDYTIRTIFNLPEIKT</sequence>
<name>NDHI_MONCO</name>
<proteinExistence type="inferred from homology"/>
<keyword id="KW-0004">4Fe-4S</keyword>
<keyword id="KW-0150">Chloroplast</keyword>
<keyword id="KW-0408">Iron</keyword>
<keyword id="KW-0411">Iron-sulfur</keyword>
<keyword id="KW-0472">Membrane</keyword>
<keyword id="KW-0479">Metal-binding</keyword>
<keyword id="KW-0520">NAD</keyword>
<keyword id="KW-0521">NADP</keyword>
<keyword id="KW-0934">Plastid</keyword>
<keyword id="KW-0618">Plastoquinone</keyword>
<keyword id="KW-0874">Quinone</keyword>
<keyword id="KW-0677">Repeat</keyword>
<keyword id="KW-0793">Thylakoid</keyword>
<keyword id="KW-1278">Translocase</keyword>
<gene>
    <name evidence="1" type="primary">ndhI</name>
</gene>
<feature type="chain" id="PRO_0000250818" description="NAD(P)H-quinone oxidoreductase subunit I, chloroplastic">
    <location>
        <begin position="1"/>
        <end position="166"/>
    </location>
</feature>
<feature type="domain" description="4Fe-4S ferredoxin-type 1" evidence="1">
    <location>
        <begin position="55"/>
        <end position="84"/>
    </location>
</feature>
<feature type="domain" description="4Fe-4S ferredoxin-type 2" evidence="1">
    <location>
        <begin position="95"/>
        <end position="124"/>
    </location>
</feature>
<feature type="binding site" evidence="1">
    <location>
        <position position="64"/>
    </location>
    <ligand>
        <name>[4Fe-4S] cluster</name>
        <dbReference type="ChEBI" id="CHEBI:49883"/>
        <label>1</label>
    </ligand>
</feature>
<feature type="binding site" evidence="1">
    <location>
        <position position="67"/>
    </location>
    <ligand>
        <name>[4Fe-4S] cluster</name>
        <dbReference type="ChEBI" id="CHEBI:49883"/>
        <label>1</label>
    </ligand>
</feature>
<feature type="binding site" evidence="1">
    <location>
        <position position="70"/>
    </location>
    <ligand>
        <name>[4Fe-4S] cluster</name>
        <dbReference type="ChEBI" id="CHEBI:49883"/>
        <label>1</label>
    </ligand>
</feature>
<feature type="binding site" evidence="1">
    <location>
        <position position="74"/>
    </location>
    <ligand>
        <name>[4Fe-4S] cluster</name>
        <dbReference type="ChEBI" id="CHEBI:49883"/>
        <label>2</label>
    </ligand>
</feature>
<feature type="binding site" evidence="1">
    <location>
        <position position="104"/>
    </location>
    <ligand>
        <name>[4Fe-4S] cluster</name>
        <dbReference type="ChEBI" id="CHEBI:49883"/>
        <label>2</label>
    </ligand>
</feature>
<feature type="binding site" evidence="1">
    <location>
        <position position="107"/>
    </location>
    <ligand>
        <name>[4Fe-4S] cluster</name>
        <dbReference type="ChEBI" id="CHEBI:49883"/>
        <label>2</label>
    </ligand>
</feature>
<feature type="binding site" evidence="1">
    <location>
        <position position="110"/>
    </location>
    <ligand>
        <name>[4Fe-4S] cluster</name>
        <dbReference type="ChEBI" id="CHEBI:49883"/>
        <label>2</label>
    </ligand>
</feature>
<feature type="binding site" evidence="1">
    <location>
        <position position="114"/>
    </location>
    <ligand>
        <name>[4Fe-4S] cluster</name>
        <dbReference type="ChEBI" id="CHEBI:49883"/>
        <label>1</label>
    </ligand>
</feature>
<comment type="function">
    <text evidence="1">NDH shuttles electrons from NAD(P)H:plastoquinone, via FMN and iron-sulfur (Fe-S) centers, to quinones in the photosynthetic chain and possibly in a chloroplast respiratory chain. The immediate electron acceptor for the enzyme in this species is believed to be plastoquinone. Couples the redox reaction to proton translocation, and thus conserves the redox energy in a proton gradient.</text>
</comment>
<comment type="catalytic activity">
    <reaction evidence="1">
        <text>a plastoquinone + NADH + (n+1) H(+)(in) = a plastoquinol + NAD(+) + n H(+)(out)</text>
        <dbReference type="Rhea" id="RHEA:42608"/>
        <dbReference type="Rhea" id="RHEA-COMP:9561"/>
        <dbReference type="Rhea" id="RHEA-COMP:9562"/>
        <dbReference type="ChEBI" id="CHEBI:15378"/>
        <dbReference type="ChEBI" id="CHEBI:17757"/>
        <dbReference type="ChEBI" id="CHEBI:57540"/>
        <dbReference type="ChEBI" id="CHEBI:57945"/>
        <dbReference type="ChEBI" id="CHEBI:62192"/>
    </reaction>
</comment>
<comment type="catalytic activity">
    <reaction evidence="1">
        <text>a plastoquinone + NADPH + (n+1) H(+)(in) = a plastoquinol + NADP(+) + n H(+)(out)</text>
        <dbReference type="Rhea" id="RHEA:42612"/>
        <dbReference type="Rhea" id="RHEA-COMP:9561"/>
        <dbReference type="Rhea" id="RHEA-COMP:9562"/>
        <dbReference type="ChEBI" id="CHEBI:15378"/>
        <dbReference type="ChEBI" id="CHEBI:17757"/>
        <dbReference type="ChEBI" id="CHEBI:57783"/>
        <dbReference type="ChEBI" id="CHEBI:58349"/>
        <dbReference type="ChEBI" id="CHEBI:62192"/>
    </reaction>
</comment>
<comment type="cofactor">
    <cofactor evidence="1">
        <name>[4Fe-4S] cluster</name>
        <dbReference type="ChEBI" id="CHEBI:49883"/>
    </cofactor>
    <text evidence="1">Binds 2 [4Fe-4S] clusters per subunit.</text>
</comment>
<comment type="subunit">
    <text evidence="1">NDH is composed of at least 16 different subunits, 5 of which are encoded in the nucleus.</text>
</comment>
<comment type="subcellular location">
    <subcellularLocation>
        <location evidence="1">Plastid</location>
        <location evidence="1">Chloroplast thylakoid membrane</location>
        <topology evidence="1">Peripheral membrane protein</topology>
    </subcellularLocation>
</comment>
<comment type="similarity">
    <text evidence="1">Belongs to the complex I 23 kDa subunit family.</text>
</comment>